<protein>
    <recommendedName>
        <fullName>Probable quinol oxidase subunit 3</fullName>
        <ecNumber>1.10.3.-</ecNumber>
    </recommendedName>
    <alternativeName>
        <fullName>Quinol oxidase polypeptide III</fullName>
    </alternativeName>
</protein>
<sequence>MSHDTNTIDSRTHEGELNKLGFWIFITAEFALFGTLFATLLTLQHGGDYAGKMTTELFELPLVLIMTFALLFSSYTCGIAIYYMRQEKQKLMMFWMIITLLLGLVFVGFEIYEFAHYASEGVNPTIGSYWSSFFILLGTHGCHVSLGIVWAICLLIQIQRRGLDKYNAPKLFIVSLYWHFLDVVWVFIFTAVYMIGMVYSG</sequence>
<gene>
    <name type="primary">qoxC</name>
    <name type="ordered locus">SAUSA300_0961</name>
</gene>
<feature type="chain" id="PRO_0000275892" description="Probable quinol oxidase subunit 3">
    <location>
        <begin position="1"/>
        <end position="201"/>
    </location>
</feature>
<feature type="transmembrane region" description="Helical" evidence="2">
    <location>
        <begin position="20"/>
        <end position="40"/>
    </location>
</feature>
<feature type="transmembrane region" description="Helical" evidence="2">
    <location>
        <begin position="62"/>
        <end position="82"/>
    </location>
</feature>
<feature type="transmembrane region" description="Helical" evidence="2">
    <location>
        <begin position="91"/>
        <end position="111"/>
    </location>
</feature>
<feature type="transmembrane region" description="Helical" evidence="2">
    <location>
        <begin position="133"/>
        <end position="153"/>
    </location>
</feature>
<feature type="transmembrane region" description="Helical" evidence="2">
    <location>
        <begin position="172"/>
        <end position="192"/>
    </location>
</feature>
<proteinExistence type="inferred from homology"/>
<reference key="1">
    <citation type="journal article" date="2006" name="Lancet">
        <title>Complete genome sequence of USA300, an epidemic clone of community-acquired meticillin-resistant Staphylococcus aureus.</title>
        <authorList>
            <person name="Diep B.A."/>
            <person name="Gill S.R."/>
            <person name="Chang R.F."/>
            <person name="Phan T.H."/>
            <person name="Chen J.H."/>
            <person name="Davidson M.G."/>
            <person name="Lin F."/>
            <person name="Lin J."/>
            <person name="Carleton H.A."/>
            <person name="Mongodin E.F."/>
            <person name="Sensabaugh G.F."/>
            <person name="Perdreau-Remington F."/>
        </authorList>
    </citation>
    <scope>NUCLEOTIDE SEQUENCE [LARGE SCALE GENOMIC DNA]</scope>
    <source>
        <strain>USA300</strain>
    </source>
</reference>
<comment type="function">
    <text evidence="1">Catalyzes quinol oxidation with the concomitant reduction of oxygen to water.</text>
</comment>
<comment type="catalytic activity">
    <reaction>
        <text>2 a quinol + O2 = 2 a quinone + 2 H2O</text>
        <dbReference type="Rhea" id="RHEA:55376"/>
        <dbReference type="ChEBI" id="CHEBI:15377"/>
        <dbReference type="ChEBI" id="CHEBI:15379"/>
        <dbReference type="ChEBI" id="CHEBI:24646"/>
        <dbReference type="ChEBI" id="CHEBI:132124"/>
    </reaction>
</comment>
<comment type="subcellular location">
    <subcellularLocation>
        <location evidence="1">Cell membrane</location>
        <topology evidence="1">Multi-pass membrane protein</topology>
    </subcellularLocation>
</comment>
<comment type="similarity">
    <text evidence="3">Belongs to the cytochrome c oxidase subunit 3 family.</text>
</comment>
<evidence type="ECO:0000250" key="1"/>
<evidence type="ECO:0000255" key="2"/>
<evidence type="ECO:0000305" key="3"/>
<dbReference type="EC" id="1.10.3.-"/>
<dbReference type="EMBL" id="CP000255">
    <property type="protein sequence ID" value="ABD21529.1"/>
    <property type="molecule type" value="Genomic_DNA"/>
</dbReference>
<dbReference type="RefSeq" id="WP_000017736.1">
    <property type="nucleotide sequence ID" value="NZ_CP027476.1"/>
</dbReference>
<dbReference type="SMR" id="Q2FI19"/>
<dbReference type="GeneID" id="66839255"/>
<dbReference type="KEGG" id="saa:SAUSA300_0961"/>
<dbReference type="HOGENOM" id="CLU_044071_3_2_9"/>
<dbReference type="OMA" id="TFKAVNP"/>
<dbReference type="Proteomes" id="UP000001939">
    <property type="component" value="Chromosome"/>
</dbReference>
<dbReference type="GO" id="GO:0005886">
    <property type="term" value="C:plasma membrane"/>
    <property type="evidence" value="ECO:0007669"/>
    <property type="project" value="UniProtKB-SubCell"/>
</dbReference>
<dbReference type="GO" id="GO:0004129">
    <property type="term" value="F:cytochrome-c oxidase activity"/>
    <property type="evidence" value="ECO:0007669"/>
    <property type="project" value="InterPro"/>
</dbReference>
<dbReference type="GO" id="GO:0019646">
    <property type="term" value="P:aerobic electron transport chain"/>
    <property type="evidence" value="ECO:0007669"/>
    <property type="project" value="InterPro"/>
</dbReference>
<dbReference type="GO" id="GO:0042773">
    <property type="term" value="P:ATP synthesis coupled electron transport"/>
    <property type="evidence" value="ECO:0007669"/>
    <property type="project" value="InterPro"/>
</dbReference>
<dbReference type="CDD" id="cd02863">
    <property type="entry name" value="Ubiquinol_oxidase_III"/>
    <property type="match status" value="1"/>
</dbReference>
<dbReference type="FunFam" id="1.20.120.80:FF:000001">
    <property type="entry name" value="Cytochrome (Ubi)quinol oxidase subunit III"/>
    <property type="match status" value="1"/>
</dbReference>
<dbReference type="Gene3D" id="1.20.120.80">
    <property type="entry name" value="Cytochrome c oxidase, subunit III, four-helix bundle"/>
    <property type="match status" value="1"/>
</dbReference>
<dbReference type="InterPro" id="IPR024791">
    <property type="entry name" value="Cyt_c/ubiquinol_Oxase_su3"/>
</dbReference>
<dbReference type="InterPro" id="IPR000298">
    <property type="entry name" value="Cyt_c_oxidase-like_su3"/>
</dbReference>
<dbReference type="InterPro" id="IPR035973">
    <property type="entry name" value="Cyt_c_oxidase_su3-like_sf"/>
</dbReference>
<dbReference type="InterPro" id="IPR013833">
    <property type="entry name" value="Cyt_c_oxidase_su3_a-hlx"/>
</dbReference>
<dbReference type="InterPro" id="IPR014246">
    <property type="entry name" value="QoxC"/>
</dbReference>
<dbReference type="InterPro" id="IPR033946">
    <property type="entry name" value="Ubiquinol_oxase_su3_dom"/>
</dbReference>
<dbReference type="NCBIfam" id="TIGR02897">
    <property type="entry name" value="QoxC"/>
    <property type="match status" value="1"/>
</dbReference>
<dbReference type="PANTHER" id="PTHR11403:SF2">
    <property type="entry name" value="CYTOCHROME BO(3) UBIQUINOL OXIDASE SUBUNIT 3"/>
    <property type="match status" value="1"/>
</dbReference>
<dbReference type="PANTHER" id="PTHR11403">
    <property type="entry name" value="CYTOCHROME C OXIDASE SUBUNIT III"/>
    <property type="match status" value="1"/>
</dbReference>
<dbReference type="Pfam" id="PF00510">
    <property type="entry name" value="COX3"/>
    <property type="match status" value="1"/>
</dbReference>
<dbReference type="SUPFAM" id="SSF81452">
    <property type="entry name" value="Cytochrome c oxidase subunit III-like"/>
    <property type="match status" value="1"/>
</dbReference>
<dbReference type="PROSITE" id="PS50253">
    <property type="entry name" value="COX3"/>
    <property type="match status" value="1"/>
</dbReference>
<keyword id="KW-1003">Cell membrane</keyword>
<keyword id="KW-0472">Membrane</keyword>
<keyword id="KW-0560">Oxidoreductase</keyword>
<keyword id="KW-0812">Transmembrane</keyword>
<keyword id="KW-1133">Transmembrane helix</keyword>
<accession>Q2FI19</accession>
<organism>
    <name type="scientific">Staphylococcus aureus (strain USA300)</name>
    <dbReference type="NCBI Taxonomy" id="367830"/>
    <lineage>
        <taxon>Bacteria</taxon>
        <taxon>Bacillati</taxon>
        <taxon>Bacillota</taxon>
        <taxon>Bacilli</taxon>
        <taxon>Bacillales</taxon>
        <taxon>Staphylococcaceae</taxon>
        <taxon>Staphylococcus</taxon>
    </lineage>
</organism>
<name>QOX3_STAA3</name>